<accession>Q66F42</accession>
<comment type="similarity">
    <text evidence="1">Belongs to the UPF0213 family.</text>
</comment>
<feature type="chain" id="PRO_1000063706" description="UPF0213 protein YPTB0498">
    <location>
        <begin position="1"/>
        <end position="95"/>
    </location>
</feature>
<feature type="domain" description="GIY-YIG" evidence="1">
    <location>
        <begin position="4"/>
        <end position="79"/>
    </location>
</feature>
<organism>
    <name type="scientific">Yersinia pseudotuberculosis serotype I (strain IP32953)</name>
    <dbReference type="NCBI Taxonomy" id="273123"/>
    <lineage>
        <taxon>Bacteria</taxon>
        <taxon>Pseudomonadati</taxon>
        <taxon>Pseudomonadota</taxon>
        <taxon>Gammaproteobacteria</taxon>
        <taxon>Enterobacterales</taxon>
        <taxon>Yersiniaceae</taxon>
        <taxon>Yersinia</taxon>
    </lineage>
</organism>
<name>Y498_YERPS</name>
<protein>
    <recommendedName>
        <fullName evidence="1">UPF0213 protein YPTB0498</fullName>
    </recommendedName>
</protein>
<sequence length="95" mass="10643">MSDSLWHLYLLRTASGMLYTGITTDVARRLAQHQAGKGAKALRGKGELTLVFHCEAGDRSTALKLEYRVKQLSKQQKEKLVIDQPRLLTTLFLAS</sequence>
<reference key="1">
    <citation type="journal article" date="2004" name="Proc. Natl. Acad. Sci. U.S.A.">
        <title>Insights into the evolution of Yersinia pestis through whole-genome comparison with Yersinia pseudotuberculosis.</title>
        <authorList>
            <person name="Chain P.S.G."/>
            <person name="Carniel E."/>
            <person name="Larimer F.W."/>
            <person name="Lamerdin J."/>
            <person name="Stoutland P.O."/>
            <person name="Regala W.M."/>
            <person name="Georgescu A.M."/>
            <person name="Vergez L.M."/>
            <person name="Land M.L."/>
            <person name="Motin V.L."/>
            <person name="Brubaker R.R."/>
            <person name="Fowler J."/>
            <person name="Hinnebusch J."/>
            <person name="Marceau M."/>
            <person name="Medigue C."/>
            <person name="Simonet M."/>
            <person name="Chenal-Francisque V."/>
            <person name="Souza B."/>
            <person name="Dacheux D."/>
            <person name="Elliott J.M."/>
            <person name="Derbise A."/>
            <person name="Hauser L.J."/>
            <person name="Garcia E."/>
        </authorList>
    </citation>
    <scope>NUCLEOTIDE SEQUENCE [LARGE SCALE GENOMIC DNA]</scope>
    <source>
        <strain>IP32953</strain>
    </source>
</reference>
<dbReference type="EMBL" id="BX936398">
    <property type="protein sequence ID" value="CAH19738.1"/>
    <property type="molecule type" value="Genomic_DNA"/>
</dbReference>
<dbReference type="RefSeq" id="WP_011191637.1">
    <property type="nucleotide sequence ID" value="NC_006155.1"/>
</dbReference>
<dbReference type="SMR" id="Q66F42"/>
<dbReference type="KEGG" id="ypo:BZ17_2065"/>
<dbReference type="KEGG" id="yps:YPTB0498"/>
<dbReference type="PATRIC" id="fig|273123.14.peg.2192"/>
<dbReference type="Proteomes" id="UP000001011">
    <property type="component" value="Chromosome"/>
</dbReference>
<dbReference type="CDD" id="cd10456">
    <property type="entry name" value="GIY-YIG_UPF0213"/>
    <property type="match status" value="1"/>
</dbReference>
<dbReference type="Gene3D" id="3.40.1440.10">
    <property type="entry name" value="GIY-YIG endonuclease"/>
    <property type="match status" value="1"/>
</dbReference>
<dbReference type="HAMAP" id="MF_01029">
    <property type="entry name" value="UPF0213"/>
    <property type="match status" value="1"/>
</dbReference>
<dbReference type="InterPro" id="IPR000305">
    <property type="entry name" value="GIY-YIG_endonuc"/>
</dbReference>
<dbReference type="InterPro" id="IPR035901">
    <property type="entry name" value="GIY-YIG_endonuc_sf"/>
</dbReference>
<dbReference type="InterPro" id="IPR050190">
    <property type="entry name" value="UPF0213_domain"/>
</dbReference>
<dbReference type="InterPro" id="IPR022992">
    <property type="entry name" value="UPF0213_GIY-YIG_endonuc"/>
</dbReference>
<dbReference type="PANTHER" id="PTHR34477">
    <property type="entry name" value="UPF0213 PROTEIN YHBQ"/>
    <property type="match status" value="1"/>
</dbReference>
<dbReference type="PANTHER" id="PTHR34477:SF1">
    <property type="entry name" value="UPF0213 PROTEIN YHBQ"/>
    <property type="match status" value="1"/>
</dbReference>
<dbReference type="Pfam" id="PF01541">
    <property type="entry name" value="GIY-YIG"/>
    <property type="match status" value="1"/>
</dbReference>
<dbReference type="SUPFAM" id="SSF82771">
    <property type="entry name" value="GIY-YIG endonuclease"/>
    <property type="match status" value="1"/>
</dbReference>
<dbReference type="PROSITE" id="PS50164">
    <property type="entry name" value="GIY_YIG"/>
    <property type="match status" value="1"/>
</dbReference>
<proteinExistence type="inferred from homology"/>
<gene>
    <name type="ordered locus">YPTB0498</name>
</gene>
<evidence type="ECO:0000255" key="1">
    <source>
        <dbReference type="HAMAP-Rule" id="MF_01029"/>
    </source>
</evidence>